<organism>
    <name type="scientific">Geotalea uraniireducens (strain Rf4)</name>
    <name type="common">Geobacter uraniireducens</name>
    <dbReference type="NCBI Taxonomy" id="351605"/>
    <lineage>
        <taxon>Bacteria</taxon>
        <taxon>Pseudomonadati</taxon>
        <taxon>Thermodesulfobacteriota</taxon>
        <taxon>Desulfuromonadia</taxon>
        <taxon>Geobacterales</taxon>
        <taxon>Geobacteraceae</taxon>
        <taxon>Geotalea</taxon>
    </lineage>
</organism>
<comment type="function">
    <text evidence="1">Produces ATP from ADP in the presence of a proton gradient across the membrane. The alpha chain is a regulatory subunit.</text>
</comment>
<comment type="catalytic activity">
    <reaction evidence="1">
        <text>ATP + H2O + 4 H(+)(in) = ADP + phosphate + 5 H(+)(out)</text>
        <dbReference type="Rhea" id="RHEA:57720"/>
        <dbReference type="ChEBI" id="CHEBI:15377"/>
        <dbReference type="ChEBI" id="CHEBI:15378"/>
        <dbReference type="ChEBI" id="CHEBI:30616"/>
        <dbReference type="ChEBI" id="CHEBI:43474"/>
        <dbReference type="ChEBI" id="CHEBI:456216"/>
        <dbReference type="EC" id="7.1.2.2"/>
    </reaction>
</comment>
<comment type="subunit">
    <text evidence="1">F-type ATPases have 2 components, CF(1) - the catalytic core - and CF(0) - the membrane proton channel. CF(1) has five subunits: alpha(3), beta(3), gamma(1), delta(1), epsilon(1). CF(0) has three main subunits: a(1), b(2) and c(9-12). The alpha and beta chains form an alternating ring which encloses part of the gamma chain. CF(1) is attached to CF(0) by a central stalk formed by the gamma and epsilon chains, while a peripheral stalk is formed by the delta and b chains.</text>
</comment>
<comment type="subcellular location">
    <subcellularLocation>
        <location evidence="1">Cell inner membrane</location>
        <topology evidence="1">Peripheral membrane protein</topology>
    </subcellularLocation>
</comment>
<comment type="similarity">
    <text evidence="1">Belongs to the ATPase alpha/beta chains family.</text>
</comment>
<feature type="chain" id="PRO_1000086880" description="ATP synthase subunit alpha">
    <location>
        <begin position="1"/>
        <end position="502"/>
    </location>
</feature>
<feature type="binding site" evidence="1">
    <location>
        <begin position="169"/>
        <end position="176"/>
    </location>
    <ligand>
        <name>ATP</name>
        <dbReference type="ChEBI" id="CHEBI:30616"/>
    </ligand>
</feature>
<feature type="site" description="Required for activity" evidence="1">
    <location>
        <position position="362"/>
    </location>
</feature>
<gene>
    <name evidence="1" type="primary">atpA</name>
    <name type="ordered locus">Gura_4261</name>
</gene>
<protein>
    <recommendedName>
        <fullName evidence="1">ATP synthase subunit alpha</fullName>
        <ecNumber evidence="1">7.1.2.2</ecNumber>
    </recommendedName>
    <alternativeName>
        <fullName evidence="1">ATP synthase F1 sector subunit alpha</fullName>
    </alternativeName>
    <alternativeName>
        <fullName evidence="1">F-ATPase subunit alpha</fullName>
    </alternativeName>
</protein>
<proteinExistence type="inferred from homology"/>
<sequence length="502" mass="54450">MEIRAEEISEIIRKQIKEYGTEVAVAETGTIISIGDGIARIHGLDKAMAGELLEFPGGISGMVLNLEEDNVGAAILGEFSEIKEGDTVKRTGKIVEVPVGEALIGRVVNALGQPIDGKGPINTDKFGKVEVKAPGIVQRKSVHQPMQTGLKAIDSMVPIGRGQRELIIGDRQTGKTAVAIDTIINQKGGDVVCIYVAIGQKRSTVAQVVSKLQEHGAMDYTIIVAATASEPAPLQFISPYTGVTMGEYFRDSGKHALIIYDDLSKQAVAYRQLSLLLRRPPGREAYPGDVFYLHSRLLERACKVSDACGAGSLTALPIIETQAGDVSAYIPTNVISITDGQIYLESDLFYSGVRPAINVGLSVSRVGGSAQVKAMKQVAGTLRLSLAQYREMAAFAQFGSDLDKATQMQLARGERLVEILKQPQYKPVPNEKQVLIIFAANNGFIDDYPVSALRRYETELYTFFDTRKADVLADLRDKKAIDDDIKGKIVAALNEFKKEFTA</sequence>
<name>ATPA_GEOUR</name>
<accession>A5G9D6</accession>
<keyword id="KW-0066">ATP synthesis</keyword>
<keyword id="KW-0067">ATP-binding</keyword>
<keyword id="KW-0997">Cell inner membrane</keyword>
<keyword id="KW-1003">Cell membrane</keyword>
<keyword id="KW-0139">CF(1)</keyword>
<keyword id="KW-0375">Hydrogen ion transport</keyword>
<keyword id="KW-0406">Ion transport</keyword>
<keyword id="KW-0472">Membrane</keyword>
<keyword id="KW-0547">Nucleotide-binding</keyword>
<keyword id="KW-1185">Reference proteome</keyword>
<keyword id="KW-1278">Translocase</keyword>
<keyword id="KW-0813">Transport</keyword>
<dbReference type="EC" id="7.1.2.2" evidence="1"/>
<dbReference type="EMBL" id="CP000698">
    <property type="protein sequence ID" value="ABQ28404.1"/>
    <property type="molecule type" value="Genomic_DNA"/>
</dbReference>
<dbReference type="RefSeq" id="WP_011941034.1">
    <property type="nucleotide sequence ID" value="NC_009483.1"/>
</dbReference>
<dbReference type="SMR" id="A5G9D6"/>
<dbReference type="STRING" id="351605.Gura_4261"/>
<dbReference type="KEGG" id="gur:Gura_4261"/>
<dbReference type="HOGENOM" id="CLU_010091_2_1_7"/>
<dbReference type="OrthoDB" id="9803053at2"/>
<dbReference type="Proteomes" id="UP000006695">
    <property type="component" value="Chromosome"/>
</dbReference>
<dbReference type="GO" id="GO:0005886">
    <property type="term" value="C:plasma membrane"/>
    <property type="evidence" value="ECO:0007669"/>
    <property type="project" value="UniProtKB-SubCell"/>
</dbReference>
<dbReference type="GO" id="GO:0045259">
    <property type="term" value="C:proton-transporting ATP synthase complex"/>
    <property type="evidence" value="ECO:0007669"/>
    <property type="project" value="UniProtKB-KW"/>
</dbReference>
<dbReference type="GO" id="GO:0043531">
    <property type="term" value="F:ADP binding"/>
    <property type="evidence" value="ECO:0007669"/>
    <property type="project" value="TreeGrafter"/>
</dbReference>
<dbReference type="GO" id="GO:0005524">
    <property type="term" value="F:ATP binding"/>
    <property type="evidence" value="ECO:0007669"/>
    <property type="project" value="UniProtKB-UniRule"/>
</dbReference>
<dbReference type="GO" id="GO:0046933">
    <property type="term" value="F:proton-transporting ATP synthase activity, rotational mechanism"/>
    <property type="evidence" value="ECO:0007669"/>
    <property type="project" value="UniProtKB-UniRule"/>
</dbReference>
<dbReference type="CDD" id="cd18113">
    <property type="entry name" value="ATP-synt_F1_alpha_C"/>
    <property type="match status" value="1"/>
</dbReference>
<dbReference type="CDD" id="cd18116">
    <property type="entry name" value="ATP-synt_F1_alpha_N"/>
    <property type="match status" value="1"/>
</dbReference>
<dbReference type="CDD" id="cd01132">
    <property type="entry name" value="F1-ATPase_alpha_CD"/>
    <property type="match status" value="1"/>
</dbReference>
<dbReference type="FunFam" id="1.20.150.20:FF:000001">
    <property type="entry name" value="ATP synthase subunit alpha"/>
    <property type="match status" value="1"/>
</dbReference>
<dbReference type="FunFam" id="2.40.30.20:FF:000001">
    <property type="entry name" value="ATP synthase subunit alpha"/>
    <property type="match status" value="1"/>
</dbReference>
<dbReference type="FunFam" id="3.40.50.300:FF:000002">
    <property type="entry name" value="ATP synthase subunit alpha"/>
    <property type="match status" value="1"/>
</dbReference>
<dbReference type="Gene3D" id="2.40.30.20">
    <property type="match status" value="1"/>
</dbReference>
<dbReference type="Gene3D" id="1.20.150.20">
    <property type="entry name" value="ATP synthase alpha/beta chain, C-terminal domain"/>
    <property type="match status" value="1"/>
</dbReference>
<dbReference type="Gene3D" id="3.40.50.300">
    <property type="entry name" value="P-loop containing nucleotide triphosphate hydrolases"/>
    <property type="match status" value="1"/>
</dbReference>
<dbReference type="HAMAP" id="MF_01346">
    <property type="entry name" value="ATP_synth_alpha_bact"/>
    <property type="match status" value="1"/>
</dbReference>
<dbReference type="InterPro" id="IPR023366">
    <property type="entry name" value="ATP_synth_asu-like_sf"/>
</dbReference>
<dbReference type="InterPro" id="IPR000793">
    <property type="entry name" value="ATP_synth_asu_C"/>
</dbReference>
<dbReference type="InterPro" id="IPR038376">
    <property type="entry name" value="ATP_synth_asu_C_sf"/>
</dbReference>
<dbReference type="InterPro" id="IPR033732">
    <property type="entry name" value="ATP_synth_F1_a_nt-bd_dom"/>
</dbReference>
<dbReference type="InterPro" id="IPR005294">
    <property type="entry name" value="ATP_synth_F1_asu"/>
</dbReference>
<dbReference type="InterPro" id="IPR020003">
    <property type="entry name" value="ATPase_a/bsu_AS"/>
</dbReference>
<dbReference type="InterPro" id="IPR004100">
    <property type="entry name" value="ATPase_F1/V1/A1_a/bsu_N"/>
</dbReference>
<dbReference type="InterPro" id="IPR036121">
    <property type="entry name" value="ATPase_F1/V1/A1_a/bsu_N_sf"/>
</dbReference>
<dbReference type="InterPro" id="IPR000194">
    <property type="entry name" value="ATPase_F1/V1/A1_a/bsu_nucl-bd"/>
</dbReference>
<dbReference type="InterPro" id="IPR027417">
    <property type="entry name" value="P-loop_NTPase"/>
</dbReference>
<dbReference type="NCBIfam" id="TIGR00962">
    <property type="entry name" value="atpA"/>
    <property type="match status" value="1"/>
</dbReference>
<dbReference type="NCBIfam" id="NF009884">
    <property type="entry name" value="PRK13343.1"/>
    <property type="match status" value="1"/>
</dbReference>
<dbReference type="PANTHER" id="PTHR48082">
    <property type="entry name" value="ATP SYNTHASE SUBUNIT ALPHA, MITOCHONDRIAL"/>
    <property type="match status" value="1"/>
</dbReference>
<dbReference type="PANTHER" id="PTHR48082:SF2">
    <property type="entry name" value="ATP SYNTHASE SUBUNIT ALPHA, MITOCHONDRIAL"/>
    <property type="match status" value="1"/>
</dbReference>
<dbReference type="Pfam" id="PF00006">
    <property type="entry name" value="ATP-synt_ab"/>
    <property type="match status" value="1"/>
</dbReference>
<dbReference type="Pfam" id="PF00306">
    <property type="entry name" value="ATP-synt_ab_C"/>
    <property type="match status" value="1"/>
</dbReference>
<dbReference type="Pfam" id="PF02874">
    <property type="entry name" value="ATP-synt_ab_N"/>
    <property type="match status" value="1"/>
</dbReference>
<dbReference type="PIRSF" id="PIRSF039088">
    <property type="entry name" value="F_ATPase_subunit_alpha"/>
    <property type="match status" value="1"/>
</dbReference>
<dbReference type="SUPFAM" id="SSF47917">
    <property type="entry name" value="C-terminal domain of alpha and beta subunits of F1 ATP synthase"/>
    <property type="match status" value="1"/>
</dbReference>
<dbReference type="SUPFAM" id="SSF50615">
    <property type="entry name" value="N-terminal domain of alpha and beta subunits of F1 ATP synthase"/>
    <property type="match status" value="1"/>
</dbReference>
<dbReference type="SUPFAM" id="SSF52540">
    <property type="entry name" value="P-loop containing nucleoside triphosphate hydrolases"/>
    <property type="match status" value="1"/>
</dbReference>
<dbReference type="PROSITE" id="PS00152">
    <property type="entry name" value="ATPASE_ALPHA_BETA"/>
    <property type="match status" value="1"/>
</dbReference>
<reference key="1">
    <citation type="submission" date="2007-05" db="EMBL/GenBank/DDBJ databases">
        <title>Complete sequence of Geobacter uraniireducens Rf4.</title>
        <authorList>
            <consortium name="US DOE Joint Genome Institute"/>
            <person name="Copeland A."/>
            <person name="Lucas S."/>
            <person name="Lapidus A."/>
            <person name="Barry K."/>
            <person name="Detter J.C."/>
            <person name="Glavina del Rio T."/>
            <person name="Hammon N."/>
            <person name="Israni S."/>
            <person name="Dalin E."/>
            <person name="Tice H."/>
            <person name="Pitluck S."/>
            <person name="Chertkov O."/>
            <person name="Brettin T."/>
            <person name="Bruce D."/>
            <person name="Han C."/>
            <person name="Schmutz J."/>
            <person name="Larimer F."/>
            <person name="Land M."/>
            <person name="Hauser L."/>
            <person name="Kyrpides N."/>
            <person name="Mikhailova N."/>
            <person name="Shelobolina E."/>
            <person name="Aklujkar M."/>
            <person name="Lovley D."/>
            <person name="Richardson P."/>
        </authorList>
    </citation>
    <scope>NUCLEOTIDE SEQUENCE [LARGE SCALE GENOMIC DNA]</scope>
    <source>
        <strain>ATCC BAA-1134 / JCM 13001 / Rf4</strain>
    </source>
</reference>
<evidence type="ECO:0000255" key="1">
    <source>
        <dbReference type="HAMAP-Rule" id="MF_01346"/>
    </source>
</evidence>